<protein>
    <recommendedName>
        <fullName>Glutamine--fructose-6-phosphate aminotransferase [isomerizing]</fullName>
        <shortName>GFAT</shortName>
        <ecNumber>2.6.1.16</ecNumber>
    </recommendedName>
    <alternativeName>
        <fullName>D-fructose-6-phosphate amidotransferase</fullName>
    </alternativeName>
    <alternativeName>
        <fullName>Hexosephosphate aminotransferase</fullName>
    </alternativeName>
</protein>
<proteinExistence type="evidence at protein level"/>
<reference key="1">
    <citation type="journal article" date="1989" name="J. Biol. Chem.">
        <title>Cloning of the glutamine:fructose-6-phosphate amidotransferase gene from yeast. Pheromonal regulation of its transcription.</title>
        <authorList>
            <person name="Watzele G."/>
            <person name="Tanner W."/>
        </authorList>
    </citation>
    <scope>NUCLEOTIDE SEQUENCE [GENOMIC DNA]</scope>
    <source>
        <strain>ATCC 26786 / X2180-1A</strain>
    </source>
</reference>
<reference key="2">
    <citation type="journal article" date="1993" name="Yeast">
        <title>The DNA sequence analysis of the HAP4-LAP4 region on chromosome XI of Saccharomyces cerevisiae suggests the presence of a second aspartate aminotransferase gene in yeast.</title>
        <authorList>
            <person name="Cheret G."/>
            <person name="Pallier C."/>
            <person name="Valens M."/>
            <person name="Daignan-Fornier B."/>
            <person name="Fukuhara H."/>
            <person name="Bolotin-Fukuhara M."/>
            <person name="Sor F."/>
        </authorList>
    </citation>
    <scope>NUCLEOTIDE SEQUENCE [GENOMIC DNA]</scope>
    <source>
        <strain>ATCC 204508 / S288c</strain>
    </source>
</reference>
<reference key="3">
    <citation type="journal article" date="1994" name="Nature">
        <title>Complete DNA sequence of yeast chromosome XI.</title>
        <authorList>
            <person name="Dujon B."/>
            <person name="Alexandraki D."/>
            <person name="Andre B."/>
            <person name="Ansorge W."/>
            <person name="Baladron V."/>
            <person name="Ballesta J.P.G."/>
            <person name="Banrevi A."/>
            <person name="Bolle P.-A."/>
            <person name="Bolotin-Fukuhara M."/>
            <person name="Bossier P."/>
            <person name="Bou G."/>
            <person name="Boyer J."/>
            <person name="Buitrago M.J."/>
            <person name="Cheret G."/>
            <person name="Colleaux L."/>
            <person name="Daignan-Fornier B."/>
            <person name="del Rey F."/>
            <person name="Dion C."/>
            <person name="Domdey H."/>
            <person name="Duesterhoeft A."/>
            <person name="Duesterhus S."/>
            <person name="Entian K.-D."/>
            <person name="Erfle H."/>
            <person name="Esteban P.F."/>
            <person name="Feldmann H."/>
            <person name="Fernandes L."/>
            <person name="Fobo G.M."/>
            <person name="Fritz C."/>
            <person name="Fukuhara H."/>
            <person name="Gabel C."/>
            <person name="Gaillon L."/>
            <person name="Garcia-Cantalejo J.M."/>
            <person name="Garcia-Ramirez J.J."/>
            <person name="Gent M.E."/>
            <person name="Ghazvini M."/>
            <person name="Goffeau A."/>
            <person name="Gonzalez A."/>
            <person name="Grothues D."/>
            <person name="Guerreiro P."/>
            <person name="Hegemann J.H."/>
            <person name="Hewitt N."/>
            <person name="Hilger F."/>
            <person name="Hollenberg C.P."/>
            <person name="Horaitis O."/>
            <person name="Indge K.J."/>
            <person name="Jacquier A."/>
            <person name="James C.M."/>
            <person name="Jauniaux J.-C."/>
            <person name="Jimenez A."/>
            <person name="Keuchel H."/>
            <person name="Kirchrath L."/>
            <person name="Kleine K."/>
            <person name="Koetter P."/>
            <person name="Legrain P."/>
            <person name="Liebl S."/>
            <person name="Louis E.J."/>
            <person name="Maia e Silva A."/>
            <person name="Marck C."/>
            <person name="Monnier A.-L."/>
            <person name="Moestl D."/>
            <person name="Mueller S."/>
            <person name="Obermaier B."/>
            <person name="Oliver S.G."/>
            <person name="Pallier C."/>
            <person name="Pascolo S."/>
            <person name="Pfeiffer F."/>
            <person name="Philippsen P."/>
            <person name="Planta R.J."/>
            <person name="Pohl F.M."/>
            <person name="Pohl T.M."/>
            <person name="Poehlmann R."/>
            <person name="Portetelle D."/>
            <person name="Purnelle B."/>
            <person name="Puzos V."/>
            <person name="Ramezani Rad M."/>
            <person name="Rasmussen S.W."/>
            <person name="Remacha M.A."/>
            <person name="Revuelta J.L."/>
            <person name="Richard G.-F."/>
            <person name="Rieger M."/>
            <person name="Rodrigues-Pousada C."/>
            <person name="Rose M."/>
            <person name="Rupp T."/>
            <person name="Santos M.A."/>
            <person name="Schwager C."/>
            <person name="Sensen C."/>
            <person name="Skala J."/>
            <person name="Soares H."/>
            <person name="Sor F."/>
            <person name="Stegemann J."/>
            <person name="Tettelin H."/>
            <person name="Thierry A."/>
            <person name="Tzermia M."/>
            <person name="Urrestarazu L.A."/>
            <person name="van Dyck L."/>
            <person name="van Vliet-Reedijk J.C."/>
            <person name="Valens M."/>
            <person name="Vandenbol M."/>
            <person name="Vilela C."/>
            <person name="Vissers S."/>
            <person name="von Wettstein D."/>
            <person name="Voss H."/>
            <person name="Wiemann S."/>
            <person name="Xu G."/>
            <person name="Zimmermann J."/>
            <person name="Haasemann M."/>
            <person name="Becker I."/>
            <person name="Mewes H.-W."/>
        </authorList>
    </citation>
    <scope>NUCLEOTIDE SEQUENCE [LARGE SCALE GENOMIC DNA]</scope>
    <source>
        <strain>ATCC 204508 / S288c</strain>
    </source>
</reference>
<reference key="4">
    <citation type="journal article" date="2014" name="G3 (Bethesda)">
        <title>The reference genome sequence of Saccharomyces cerevisiae: Then and now.</title>
        <authorList>
            <person name="Engel S.R."/>
            <person name="Dietrich F.S."/>
            <person name="Fisk D.G."/>
            <person name="Binkley G."/>
            <person name="Balakrishnan R."/>
            <person name="Costanzo M.C."/>
            <person name="Dwight S.S."/>
            <person name="Hitz B.C."/>
            <person name="Karra K."/>
            <person name="Nash R.S."/>
            <person name="Weng S."/>
            <person name="Wong E.D."/>
            <person name="Lloyd P."/>
            <person name="Skrzypek M.S."/>
            <person name="Miyasato S.R."/>
            <person name="Simison M."/>
            <person name="Cherry J.M."/>
        </authorList>
    </citation>
    <scope>GENOME REANNOTATION</scope>
    <source>
        <strain>ATCC 204508 / S288c</strain>
    </source>
</reference>
<reference key="5">
    <citation type="journal article" date="2003" name="Nature">
        <title>Global analysis of protein expression in yeast.</title>
        <authorList>
            <person name="Ghaemmaghami S."/>
            <person name="Huh W.-K."/>
            <person name="Bower K."/>
            <person name="Howson R.W."/>
            <person name="Belle A."/>
            <person name="Dephoure N."/>
            <person name="O'Shea E.K."/>
            <person name="Weissman J.S."/>
        </authorList>
    </citation>
    <scope>LEVEL OF PROTEIN EXPRESSION [LARGE SCALE ANALYSIS]</scope>
</reference>
<reference key="6">
    <citation type="journal article" date="2005" name="J. Biol. Chem.">
        <title>Yeast glutamine-fructose-6-phosphate aminotransferase (Gfa1) requires methionine aminopeptidase activity for proper function.</title>
        <authorList>
            <person name="Dummitt B."/>
            <person name="Micka W.S."/>
            <person name="Chang Y.H."/>
        </authorList>
    </citation>
    <scope>CLEAVAGE OF INITIATOR METHIONINE</scope>
    <scope>ACTIVE SITE</scope>
    <scope>FUNCTION</scope>
    <scope>CATALYTIC ACTIVITY</scope>
</reference>
<reference key="7">
    <citation type="journal article" date="2008" name="Mol. Cell. Proteomics">
        <title>A multidimensional chromatography technology for in-depth phosphoproteome analysis.</title>
        <authorList>
            <person name="Albuquerque C.P."/>
            <person name="Smolka M.B."/>
            <person name="Payne S.H."/>
            <person name="Bafna V."/>
            <person name="Eng J."/>
            <person name="Zhou H."/>
        </authorList>
    </citation>
    <scope>PHOSPHORYLATION [LARGE SCALE ANALYSIS] AT SER-253 AND THR-334</scope>
    <scope>IDENTIFICATION BY MASS SPECTROMETRY [LARGE SCALE ANALYSIS]</scope>
</reference>
<reference key="8">
    <citation type="journal article" date="2009" name="Science">
        <title>Global analysis of Cdk1 substrate phosphorylation sites provides insights into evolution.</title>
        <authorList>
            <person name="Holt L.J."/>
            <person name="Tuch B.B."/>
            <person name="Villen J."/>
            <person name="Johnson A.D."/>
            <person name="Gygi S.P."/>
            <person name="Morgan D.O."/>
        </authorList>
    </citation>
    <scope>PHOSPHORYLATION [LARGE SCALE ANALYSIS] AT SER-253 AND SER-336</scope>
    <scope>IDENTIFICATION BY MASS SPECTROMETRY [LARGE SCALE ANALYSIS]</scope>
</reference>
<gene>
    <name type="primary">GFA1</name>
    <name type="ordered locus">YKL104C</name>
    <name type="ORF">YKL457</name>
</gene>
<evidence type="ECO:0000255" key="1">
    <source>
        <dbReference type="PROSITE-ProRule" id="PRU00609"/>
    </source>
</evidence>
<evidence type="ECO:0000255" key="2">
    <source>
        <dbReference type="PROSITE-ProRule" id="PRU00797"/>
    </source>
</evidence>
<evidence type="ECO:0000269" key="3">
    <source>
    </source>
</evidence>
<evidence type="ECO:0000269" key="4">
    <source>
    </source>
</evidence>
<evidence type="ECO:0000305" key="5"/>
<evidence type="ECO:0007744" key="6">
    <source>
    </source>
</evidence>
<evidence type="ECO:0007744" key="7">
    <source>
    </source>
</evidence>
<keyword id="KW-0032">Aminotransferase</keyword>
<keyword id="KW-0315">Glutamine amidotransferase</keyword>
<keyword id="KW-0597">Phosphoprotein</keyword>
<keyword id="KW-1185">Reference proteome</keyword>
<keyword id="KW-0677">Repeat</keyword>
<keyword id="KW-0808">Transferase</keyword>
<comment type="function">
    <text evidence="4">Involved in amino sugar synthesis (formation of chitin, supplies the amino sugars of asparagine-linked oligosaccharides of glycoproteins).</text>
</comment>
<comment type="catalytic activity">
    <reaction evidence="4">
        <text>D-fructose 6-phosphate + L-glutamine = D-glucosamine 6-phosphate + L-glutamate</text>
        <dbReference type="Rhea" id="RHEA:13237"/>
        <dbReference type="ChEBI" id="CHEBI:29985"/>
        <dbReference type="ChEBI" id="CHEBI:58359"/>
        <dbReference type="ChEBI" id="CHEBI:58725"/>
        <dbReference type="ChEBI" id="CHEBI:61527"/>
        <dbReference type="EC" id="2.6.1.16"/>
    </reaction>
</comment>
<comment type="pathway">
    <text>Nucleotide-sugar biosynthesis; UDP-N-acetyl-alpha-D-glucosamine biosynthesis; alpha-D-glucosamine 6-phosphate from D-fructose 6-phosphate: step 1/1.</text>
</comment>
<comment type="induction">
    <text>The activity of this enzyme increases in presence of mating pheromone (transcriptional regulation).</text>
</comment>
<comment type="miscellaneous">
    <text evidence="3">Present with 14300 molecules/cell in log phase SD medium.</text>
</comment>
<organism>
    <name type="scientific">Saccharomyces cerevisiae (strain ATCC 204508 / S288c)</name>
    <name type="common">Baker's yeast</name>
    <dbReference type="NCBI Taxonomy" id="559292"/>
    <lineage>
        <taxon>Eukaryota</taxon>
        <taxon>Fungi</taxon>
        <taxon>Dikarya</taxon>
        <taxon>Ascomycota</taxon>
        <taxon>Saccharomycotina</taxon>
        <taxon>Saccharomycetes</taxon>
        <taxon>Saccharomycetales</taxon>
        <taxon>Saccharomycetaceae</taxon>
        <taxon>Saccharomyces</taxon>
    </lineage>
</organism>
<feature type="initiator methionine" description="Removed" evidence="4">
    <location>
        <position position="1"/>
    </location>
</feature>
<feature type="chain" id="PRO_0000135289" description="Glutamine--fructose-6-phosphate aminotransferase [isomerizing]">
    <location>
        <begin position="2"/>
        <end position="717"/>
    </location>
</feature>
<feature type="domain" description="Glutamine amidotransferase type-2" evidence="1">
    <location>
        <begin position="2"/>
        <end position="318"/>
    </location>
</feature>
<feature type="domain" description="SIS 1" evidence="2">
    <location>
        <begin position="390"/>
        <end position="529"/>
    </location>
</feature>
<feature type="domain" description="SIS 2" evidence="2">
    <location>
        <begin position="562"/>
        <end position="707"/>
    </location>
</feature>
<feature type="active site" description="For GATase activity" evidence="4">
    <location>
        <position position="2"/>
    </location>
</feature>
<feature type="modified residue" description="Phosphoserine" evidence="6 7">
    <location>
        <position position="253"/>
    </location>
</feature>
<feature type="modified residue" description="Phosphothreonine" evidence="6">
    <location>
        <position position="334"/>
    </location>
</feature>
<feature type="modified residue" description="Phosphoserine" evidence="7">
    <location>
        <position position="336"/>
    </location>
</feature>
<feature type="sequence conflict" description="In Ref. 1; AAA34643." evidence="5" ref="1">
    <original>QS</original>
    <variation>HC</variation>
    <location>
        <begin position="453"/>
        <end position="454"/>
    </location>
</feature>
<feature type="sequence conflict" description="In Ref. 1; AAA34643." evidence="5" ref="1">
    <location>
        <position position="534"/>
    </location>
</feature>
<sequence length="717" mass="80047">MCGIFGYCNYLVERSRGEIIDTLVDGLQRLEYRGYDSTGIAIDGDEADSTFIYKQIGKVSALKEEITKQNPNRDVTFVSHCGIAHTRWATHGRPEQVNCHPQRSDPEDQFVVVHNGIITNFRELKTLLINKGYKFESDTDTECIAKLYLHLYNTNLQNGHDLDFHELTKLVLLELEGSYGLLCKSCHYPNEVIATRKGSPLLIGVKSEKKLKVDFVDVEFPEENAGQPEIPLKSNNKSFGLGPKKAREFEAGSQNANLLPIAANEFNLRHSQSRAFLSEDGSPTPVEFFVSSDAASVVKHTKKVLFLEDDDLAHIYDGELHIHRSRREVGASMTRSIQTLEMELAQIMKGPYDHFMQKEIYEQPESTFNTMRGRIDYENNKVILGGLKAWLPVVRRARRLIMIACGTSYHSCLATRAIFEELSDIPVSVELASDFLDRKCPVFRDDVCVFVSQSGETADTMLALNYCLERGALTVGIVNSVGSSISRVTHCGVHINAGPEIGVASTKAYTSQYIALVMFALSLSDDRVSKIDRRIEIIQGLKLIPGQIKQVLKLEPRIKKLCATELKDQKSLLLLGRGYQFAAALEGALKIKEISYMHSEGVLAGELKHGVLALVDENLPIIAFGTRDSLFPKVVSSIEQVTARKGHPIIICNENDEVWAQKSKSIDLQTLEVPQTVDCLQGLINIIPLQLMSYWLAVNKGIDVDFPRNLAKSVTVE</sequence>
<name>GFA1_YEAST</name>
<dbReference type="EC" id="2.6.1.16"/>
<dbReference type="EMBL" id="J04719">
    <property type="protein sequence ID" value="AAA34643.1"/>
    <property type="molecule type" value="Genomic_DNA"/>
</dbReference>
<dbReference type="EMBL" id="X71133">
    <property type="protein sequence ID" value="CAA50453.1"/>
    <property type="molecule type" value="Genomic_DNA"/>
</dbReference>
<dbReference type="EMBL" id="Z28104">
    <property type="protein sequence ID" value="CAA81944.1"/>
    <property type="molecule type" value="Genomic_DNA"/>
</dbReference>
<dbReference type="EMBL" id="BK006944">
    <property type="protein sequence ID" value="DAA09054.1"/>
    <property type="molecule type" value="Genomic_DNA"/>
</dbReference>
<dbReference type="PIR" id="S37931">
    <property type="entry name" value="XNBYGM"/>
</dbReference>
<dbReference type="RefSeq" id="NP_012818.1">
    <property type="nucleotide sequence ID" value="NM_001179670.1"/>
</dbReference>
<dbReference type="SMR" id="P14742"/>
<dbReference type="BioGRID" id="34030">
    <property type="interactions" value="247"/>
</dbReference>
<dbReference type="DIP" id="DIP-5224N"/>
<dbReference type="FunCoup" id="P14742">
    <property type="interactions" value="1346"/>
</dbReference>
<dbReference type="IntAct" id="P14742">
    <property type="interactions" value="146"/>
</dbReference>
<dbReference type="MINT" id="P14742"/>
<dbReference type="STRING" id="4932.YKL104C"/>
<dbReference type="iPTMnet" id="P14742"/>
<dbReference type="PaxDb" id="4932-YKL104C"/>
<dbReference type="PeptideAtlas" id="P14742"/>
<dbReference type="EnsemblFungi" id="YKL104C_mRNA">
    <property type="protein sequence ID" value="YKL104C"/>
    <property type="gene ID" value="YKL104C"/>
</dbReference>
<dbReference type="GeneID" id="853757"/>
<dbReference type="KEGG" id="sce:YKL104C"/>
<dbReference type="AGR" id="SGD:S000001587"/>
<dbReference type="SGD" id="S000001587">
    <property type="gene designation" value="GFA1"/>
</dbReference>
<dbReference type="VEuPathDB" id="FungiDB:YKL104C"/>
<dbReference type="eggNOG" id="KOG1268">
    <property type="taxonomic scope" value="Eukaryota"/>
</dbReference>
<dbReference type="GeneTree" id="ENSGT00940000173234"/>
<dbReference type="HOGENOM" id="CLU_012520_5_2_1"/>
<dbReference type="InParanoid" id="P14742"/>
<dbReference type="OMA" id="ASEYRYA"/>
<dbReference type="OrthoDB" id="15235at2759"/>
<dbReference type="BioCyc" id="YEAST:YKL104C-MONOMER"/>
<dbReference type="BRENDA" id="2.6.1.16">
    <property type="organism ID" value="984"/>
</dbReference>
<dbReference type="Reactome" id="R-SCE-446210">
    <property type="pathway name" value="Synthesis of UDP-N-acetyl-glucosamine"/>
</dbReference>
<dbReference type="UniPathway" id="UPA00113">
    <property type="reaction ID" value="UER00528"/>
</dbReference>
<dbReference type="BioGRID-ORCS" id="853757">
    <property type="hits" value="0 hits in 10 CRISPR screens"/>
</dbReference>
<dbReference type="CD-CODE" id="E03F929F">
    <property type="entry name" value="Stress granule"/>
</dbReference>
<dbReference type="PRO" id="PR:P14742"/>
<dbReference type="Proteomes" id="UP000002311">
    <property type="component" value="Chromosome XI"/>
</dbReference>
<dbReference type="RNAct" id="P14742">
    <property type="molecule type" value="protein"/>
</dbReference>
<dbReference type="GO" id="GO:0097367">
    <property type="term" value="F:carbohydrate derivative binding"/>
    <property type="evidence" value="ECO:0007669"/>
    <property type="project" value="InterPro"/>
</dbReference>
<dbReference type="GO" id="GO:0004360">
    <property type="term" value="F:glutamine-fructose-6-phosphate transaminase (isomerizing) activity"/>
    <property type="evidence" value="ECO:0000314"/>
    <property type="project" value="SGD"/>
</dbReference>
<dbReference type="GO" id="GO:0006031">
    <property type="term" value="P:chitin biosynthetic process"/>
    <property type="evidence" value="ECO:0000316"/>
    <property type="project" value="SGD"/>
</dbReference>
<dbReference type="GO" id="GO:0006002">
    <property type="term" value="P:fructose 6-phosphate metabolic process"/>
    <property type="evidence" value="ECO:0000318"/>
    <property type="project" value="GO_Central"/>
</dbReference>
<dbReference type="GO" id="GO:0006487">
    <property type="term" value="P:protein N-linked glycosylation"/>
    <property type="evidence" value="ECO:0000318"/>
    <property type="project" value="GO_Central"/>
</dbReference>
<dbReference type="GO" id="GO:0006048">
    <property type="term" value="P:UDP-N-acetylglucosamine biosynthetic process"/>
    <property type="evidence" value="ECO:0007669"/>
    <property type="project" value="UniProtKB-UniPathway"/>
</dbReference>
<dbReference type="GO" id="GO:0006047">
    <property type="term" value="P:UDP-N-acetylglucosamine metabolic process"/>
    <property type="evidence" value="ECO:0000318"/>
    <property type="project" value="GO_Central"/>
</dbReference>
<dbReference type="CDD" id="cd00714">
    <property type="entry name" value="GFAT"/>
    <property type="match status" value="1"/>
</dbReference>
<dbReference type="CDD" id="cd05008">
    <property type="entry name" value="SIS_GlmS_GlmD_1"/>
    <property type="match status" value="1"/>
</dbReference>
<dbReference type="CDD" id="cd05009">
    <property type="entry name" value="SIS_GlmS_GlmD_2"/>
    <property type="match status" value="1"/>
</dbReference>
<dbReference type="FunFam" id="3.40.50.10490:FF:000001">
    <property type="entry name" value="Glutamine--fructose-6-phosphate aminotransferase [isomerizing]"/>
    <property type="match status" value="1"/>
</dbReference>
<dbReference type="FunFam" id="3.40.50.10490:FF:000002">
    <property type="entry name" value="Glutamine--fructose-6-phosphate aminotransferase [isomerizing]"/>
    <property type="match status" value="1"/>
</dbReference>
<dbReference type="Gene3D" id="3.40.50.10490">
    <property type="entry name" value="Glucose-6-phosphate isomerase like protein, domain 1"/>
    <property type="match status" value="2"/>
</dbReference>
<dbReference type="Gene3D" id="3.60.20.10">
    <property type="entry name" value="Glutamine Phosphoribosylpyrophosphate, subunit 1, domain 1"/>
    <property type="match status" value="1"/>
</dbReference>
<dbReference type="InterPro" id="IPR017932">
    <property type="entry name" value="GATase_2_dom"/>
</dbReference>
<dbReference type="InterPro" id="IPR047084">
    <property type="entry name" value="GFAT_N"/>
</dbReference>
<dbReference type="InterPro" id="IPR035466">
    <property type="entry name" value="GlmS/AgaS_SIS"/>
</dbReference>
<dbReference type="InterPro" id="IPR035490">
    <property type="entry name" value="GlmS/FrlB_SIS"/>
</dbReference>
<dbReference type="InterPro" id="IPR029055">
    <property type="entry name" value="Ntn_hydrolases_N"/>
</dbReference>
<dbReference type="InterPro" id="IPR001347">
    <property type="entry name" value="SIS_dom"/>
</dbReference>
<dbReference type="InterPro" id="IPR046348">
    <property type="entry name" value="SIS_dom_sf"/>
</dbReference>
<dbReference type="NCBIfam" id="NF001484">
    <property type="entry name" value="PRK00331.1"/>
    <property type="match status" value="1"/>
</dbReference>
<dbReference type="PANTHER" id="PTHR10937">
    <property type="entry name" value="GLUCOSAMINE--FRUCTOSE-6-PHOSPHATE AMINOTRANSFERASE, ISOMERIZING"/>
    <property type="match status" value="1"/>
</dbReference>
<dbReference type="PANTHER" id="PTHR10937:SF0">
    <property type="entry name" value="GLUTAMINE--FRUCTOSE-6-PHOSPHATE TRANSAMINASE (ISOMERIZING)"/>
    <property type="match status" value="1"/>
</dbReference>
<dbReference type="Pfam" id="PF13522">
    <property type="entry name" value="GATase_6"/>
    <property type="match status" value="1"/>
</dbReference>
<dbReference type="Pfam" id="PF01380">
    <property type="entry name" value="SIS"/>
    <property type="match status" value="2"/>
</dbReference>
<dbReference type="SUPFAM" id="SSF56235">
    <property type="entry name" value="N-terminal nucleophile aminohydrolases (Ntn hydrolases)"/>
    <property type="match status" value="1"/>
</dbReference>
<dbReference type="SUPFAM" id="SSF53697">
    <property type="entry name" value="SIS domain"/>
    <property type="match status" value="1"/>
</dbReference>
<dbReference type="PROSITE" id="PS51278">
    <property type="entry name" value="GATASE_TYPE_2"/>
    <property type="match status" value="1"/>
</dbReference>
<dbReference type="PROSITE" id="PS51464">
    <property type="entry name" value="SIS"/>
    <property type="match status" value="2"/>
</dbReference>
<accession>P14742</accession>
<accession>D6VXI4</accession>